<sequence length="34" mass="3755">MEVNILAFIATALFILVPTAFLLIIYVKTASQND</sequence>
<comment type="function">
    <text evidence="1">One of the components of the core complex of photosystem II (PSII). PSII is a light-driven water:plastoquinone oxidoreductase that uses light energy to abstract electrons from H(2)O, generating O(2) and a proton gradient subsequently used for ATP formation. It consists of a core antenna complex that captures photons, and an electron transfer chain that converts photonic excitation into a charge separation. This subunit is found at the monomer-monomer interface.</text>
</comment>
<comment type="subunit">
    <text evidence="1">PSII is composed of 1 copy each of membrane proteins PsbA, PsbB, PsbC, PsbD, PsbE, PsbF, PsbH, PsbI, PsbJ, PsbK, PsbL, PsbM, PsbT, PsbX, PsbY, PsbZ, Psb30/Ycf12, at least 3 peripheral proteins of the oxygen-evolving complex and a large number of cofactors. It forms dimeric complexes.</text>
</comment>
<comment type="subcellular location">
    <subcellularLocation>
        <location evidence="1">Plastid</location>
        <location evidence="1">Chloroplast thylakoid membrane</location>
        <topology evidence="1">Single-pass membrane protein</topology>
    </subcellularLocation>
</comment>
<comment type="similarity">
    <text evidence="1">Belongs to the PsbM family.</text>
</comment>
<organism>
    <name type="scientific">Saccharum officinarum</name>
    <name type="common">Sugarcane</name>
    <dbReference type="NCBI Taxonomy" id="4547"/>
    <lineage>
        <taxon>Eukaryota</taxon>
        <taxon>Viridiplantae</taxon>
        <taxon>Streptophyta</taxon>
        <taxon>Embryophyta</taxon>
        <taxon>Tracheophyta</taxon>
        <taxon>Spermatophyta</taxon>
        <taxon>Magnoliopsida</taxon>
        <taxon>Liliopsida</taxon>
        <taxon>Poales</taxon>
        <taxon>Poaceae</taxon>
        <taxon>PACMAD clade</taxon>
        <taxon>Panicoideae</taxon>
        <taxon>Andropogonodae</taxon>
        <taxon>Andropogoneae</taxon>
        <taxon>Saccharinae</taxon>
        <taxon>Saccharum</taxon>
        <taxon>Saccharum officinarum species complex</taxon>
    </lineage>
</organism>
<keyword id="KW-0150">Chloroplast</keyword>
<keyword id="KW-0472">Membrane</keyword>
<keyword id="KW-0602">Photosynthesis</keyword>
<keyword id="KW-0604">Photosystem II</keyword>
<keyword id="KW-0934">Plastid</keyword>
<keyword id="KW-0674">Reaction center</keyword>
<keyword id="KW-0793">Thylakoid</keyword>
<keyword id="KW-0812">Transmembrane</keyword>
<keyword id="KW-1133">Transmembrane helix</keyword>
<feature type="chain" id="PRO_0000217577" description="Photosystem II reaction center protein M">
    <location>
        <begin position="1"/>
        <end position="34"/>
    </location>
</feature>
<feature type="transmembrane region" description="Helical" evidence="1">
    <location>
        <begin position="5"/>
        <end position="25"/>
    </location>
</feature>
<geneLocation type="chloroplast"/>
<proteinExistence type="inferred from homology"/>
<name>PSBM_SACOF</name>
<evidence type="ECO:0000255" key="1">
    <source>
        <dbReference type="HAMAP-Rule" id="MF_00438"/>
    </source>
</evidence>
<gene>
    <name evidence="1" type="primary">psbM</name>
</gene>
<dbReference type="EMBL" id="AP006714">
    <property type="protein sequence ID" value="BAD27281.1"/>
    <property type="molecule type" value="Genomic_DNA"/>
</dbReference>
<dbReference type="RefSeq" id="YP_009389559.1">
    <property type="nucleotide sequence ID" value="NC_035224.1"/>
</dbReference>
<dbReference type="SMR" id="Q6ENX5"/>
<dbReference type="GeneID" id="33347868"/>
<dbReference type="GO" id="GO:0009535">
    <property type="term" value="C:chloroplast thylakoid membrane"/>
    <property type="evidence" value="ECO:0007669"/>
    <property type="project" value="UniProtKB-SubCell"/>
</dbReference>
<dbReference type="GO" id="GO:0009523">
    <property type="term" value="C:photosystem II"/>
    <property type="evidence" value="ECO:0007669"/>
    <property type="project" value="UniProtKB-KW"/>
</dbReference>
<dbReference type="GO" id="GO:0019684">
    <property type="term" value="P:photosynthesis, light reaction"/>
    <property type="evidence" value="ECO:0007669"/>
    <property type="project" value="InterPro"/>
</dbReference>
<dbReference type="HAMAP" id="MF_00438">
    <property type="entry name" value="PSII_PsbM"/>
    <property type="match status" value="1"/>
</dbReference>
<dbReference type="InterPro" id="IPR007826">
    <property type="entry name" value="PSII_PsbM"/>
</dbReference>
<dbReference type="InterPro" id="IPR037269">
    <property type="entry name" value="PSII_PsbM_sf"/>
</dbReference>
<dbReference type="NCBIfam" id="TIGR03038">
    <property type="entry name" value="PS_II_psbM"/>
    <property type="match status" value="1"/>
</dbReference>
<dbReference type="PANTHER" id="PTHR35774">
    <property type="entry name" value="PHOTOSYSTEM II REACTION CENTER PROTEIN M"/>
    <property type="match status" value="1"/>
</dbReference>
<dbReference type="PANTHER" id="PTHR35774:SF1">
    <property type="entry name" value="PHOTOSYSTEM II REACTION CENTER PROTEIN M"/>
    <property type="match status" value="1"/>
</dbReference>
<dbReference type="Pfam" id="PF05151">
    <property type="entry name" value="PsbM"/>
    <property type="match status" value="1"/>
</dbReference>
<dbReference type="SUPFAM" id="SSF161033">
    <property type="entry name" value="Photosystem II reaction center protein M, PsbM"/>
    <property type="match status" value="1"/>
</dbReference>
<accession>Q6ENX5</accession>
<reference key="1">
    <citation type="journal article" date="2004" name="DNA Res.">
        <title>Complete nucleotide sequence of the sugarcane (Saccharum officinarum) chloroplast genome: a comparative analysis of four monocot chloroplast genomes.</title>
        <authorList>
            <person name="Asano T."/>
            <person name="Tsudzuki T."/>
            <person name="Takahashi S."/>
            <person name="Shimada H."/>
            <person name="Kadowaki K."/>
        </authorList>
    </citation>
    <scope>NUCLEOTIDE SEQUENCE [LARGE SCALE GENOMIC DNA]</scope>
</reference>
<protein>
    <recommendedName>
        <fullName evidence="1">Photosystem II reaction center protein M</fullName>
        <shortName evidence="1">PSII-M</shortName>
    </recommendedName>
</protein>